<reference key="1">
    <citation type="journal article" date="2005" name="Science">
        <title>The genome sequence of Trypanosoma cruzi, etiologic agent of Chagas disease.</title>
        <authorList>
            <person name="El-Sayed N.M.A."/>
            <person name="Myler P.J."/>
            <person name="Bartholomeu D.C."/>
            <person name="Nilsson D."/>
            <person name="Aggarwal G."/>
            <person name="Tran A.-N."/>
            <person name="Ghedin E."/>
            <person name="Worthey E.A."/>
            <person name="Delcher A.L."/>
            <person name="Blandin G."/>
            <person name="Westenberger S.J."/>
            <person name="Caler E."/>
            <person name="Cerqueira G.C."/>
            <person name="Branche C."/>
            <person name="Haas B."/>
            <person name="Anupama A."/>
            <person name="Arner E."/>
            <person name="Aslund L."/>
            <person name="Attipoe P."/>
            <person name="Bontempi E."/>
            <person name="Bringaud F."/>
            <person name="Burton P."/>
            <person name="Cadag E."/>
            <person name="Campbell D.A."/>
            <person name="Carrington M."/>
            <person name="Crabtree J."/>
            <person name="Darban H."/>
            <person name="da Silveira J.F."/>
            <person name="de Jong P."/>
            <person name="Edwards K."/>
            <person name="Englund P.T."/>
            <person name="Fazelina G."/>
            <person name="Feldblyum T."/>
            <person name="Ferella M."/>
            <person name="Frasch A.C."/>
            <person name="Gull K."/>
            <person name="Horn D."/>
            <person name="Hou L."/>
            <person name="Huang Y."/>
            <person name="Kindlund E."/>
            <person name="Klingbeil M."/>
            <person name="Kluge S."/>
            <person name="Koo H."/>
            <person name="Lacerda D."/>
            <person name="Levin M.J."/>
            <person name="Lorenzi H."/>
            <person name="Louie T."/>
            <person name="Machado C.R."/>
            <person name="McCulloch R."/>
            <person name="McKenna A."/>
            <person name="Mizuno Y."/>
            <person name="Mottram J.C."/>
            <person name="Nelson S."/>
            <person name="Ochaya S."/>
            <person name="Osoegawa K."/>
            <person name="Pai G."/>
            <person name="Parsons M."/>
            <person name="Pentony M."/>
            <person name="Pettersson U."/>
            <person name="Pop M."/>
            <person name="Ramirez J.L."/>
            <person name="Rinta J."/>
            <person name="Robertson L."/>
            <person name="Salzberg S.L."/>
            <person name="Sanchez D.O."/>
            <person name="Seyler A."/>
            <person name="Sharma R."/>
            <person name="Shetty J."/>
            <person name="Simpson A.J."/>
            <person name="Sisk E."/>
            <person name="Tammi M.T."/>
            <person name="Tarleton R."/>
            <person name="Teixeira S."/>
            <person name="Van Aken S."/>
            <person name="Vogt C."/>
            <person name="Ward P.N."/>
            <person name="Wickstead B."/>
            <person name="Wortman J."/>
            <person name="White O."/>
            <person name="Fraser C.M."/>
            <person name="Stuart K.D."/>
            <person name="Andersson B."/>
        </authorList>
    </citation>
    <scope>NUCLEOTIDE SEQUENCE [LARGE SCALE GENOMIC DNA]</scope>
    <source>
        <strain>CL Brener</strain>
    </source>
</reference>
<evidence type="ECO:0000250" key="1"/>
<evidence type="ECO:0000255" key="2">
    <source>
        <dbReference type="PROSITE-ProRule" id="PRU00945"/>
    </source>
</evidence>
<gene>
    <name type="ORF">Tc00.1047053506247.320</name>
</gene>
<accession>Q4E123</accession>
<comment type="function">
    <text evidence="1">S-adenosyl-L-methionine-dependent methyltransferase that mediates RNA cap1 2'-O-ribose methylation to the 5'-cap structure of spliced leader and U1 small nuclear RNAs. Methylates the ribose of the first nucleotide of a m(7)GpppG-capped RNA to produce m(7)GpppNmp (cap1). Cap1 modification is linked to higher levels of translation. Recognizes a guanosine cap on RNA independent of its N(7) methylation status.</text>
</comment>
<comment type="catalytic activity">
    <reaction>
        <text>a 5'-end (N(7)-methyl 5'-triphosphoguanosine)-ribonucleoside in mRNA + S-adenosyl-L-methionine = a 5'-end (N(7)-methyl 5'-triphosphoguanosine)-(2'-O-methyl-ribonucleoside) in mRNA + S-adenosyl-L-homocysteine + H(+)</text>
        <dbReference type="Rhea" id="RHEA:67020"/>
        <dbReference type="Rhea" id="RHEA-COMP:17167"/>
        <dbReference type="Rhea" id="RHEA-COMP:17168"/>
        <dbReference type="ChEBI" id="CHEBI:15378"/>
        <dbReference type="ChEBI" id="CHEBI:57856"/>
        <dbReference type="ChEBI" id="CHEBI:59789"/>
        <dbReference type="ChEBI" id="CHEBI:156461"/>
        <dbReference type="ChEBI" id="CHEBI:167609"/>
        <dbReference type="EC" id="2.1.1.57"/>
    </reaction>
</comment>
<comment type="subcellular location">
    <subcellularLocation>
        <location evidence="1">Nucleus</location>
    </subcellularLocation>
</comment>
<dbReference type="EC" id="2.1.1.57"/>
<dbReference type="EMBL" id="AAHK01000054">
    <property type="protein sequence ID" value="EAN98495.1"/>
    <property type="molecule type" value="Genomic_DNA"/>
</dbReference>
<dbReference type="RefSeq" id="XP_820346.1">
    <property type="nucleotide sequence ID" value="XM_815253.1"/>
</dbReference>
<dbReference type="SMR" id="Q4E123"/>
<dbReference type="STRING" id="353153.Q4E123"/>
<dbReference type="PaxDb" id="353153-Q4E123"/>
<dbReference type="EnsemblProtists" id="EAN98495">
    <property type="protein sequence ID" value="EAN98495"/>
    <property type="gene ID" value="Tc00.1047053506247.320"/>
</dbReference>
<dbReference type="GeneID" id="3552959"/>
<dbReference type="KEGG" id="tcr:506247.320"/>
<dbReference type="eggNOG" id="KOG3673">
    <property type="taxonomic scope" value="Eukaryota"/>
</dbReference>
<dbReference type="InParanoid" id="Q4E123"/>
<dbReference type="OMA" id="ESTGVWM"/>
<dbReference type="Proteomes" id="UP000002296">
    <property type="component" value="Unassembled WGS sequence"/>
</dbReference>
<dbReference type="GO" id="GO:0005737">
    <property type="term" value="C:cytoplasm"/>
    <property type="evidence" value="ECO:0007669"/>
    <property type="project" value="TreeGrafter"/>
</dbReference>
<dbReference type="GO" id="GO:0005634">
    <property type="term" value="C:nucleus"/>
    <property type="evidence" value="ECO:0000250"/>
    <property type="project" value="UniProtKB"/>
</dbReference>
<dbReference type="GO" id="GO:0004483">
    <property type="term" value="F:mRNA (nucleoside-2'-O-)-methyltransferase activity"/>
    <property type="evidence" value="ECO:0000250"/>
    <property type="project" value="UniProtKB"/>
</dbReference>
<dbReference type="GO" id="GO:0006370">
    <property type="term" value="P:7-methylguanosine mRNA capping"/>
    <property type="evidence" value="ECO:0000250"/>
    <property type="project" value="UniProtKB"/>
</dbReference>
<dbReference type="GO" id="GO:0032259">
    <property type="term" value="P:methylation"/>
    <property type="evidence" value="ECO:0007669"/>
    <property type="project" value="UniProtKB-KW"/>
</dbReference>
<dbReference type="GO" id="GO:0016556">
    <property type="term" value="P:mRNA modification"/>
    <property type="evidence" value="ECO:0000250"/>
    <property type="project" value="UniProtKB"/>
</dbReference>
<dbReference type="GO" id="GO:0006397">
    <property type="term" value="P:mRNA processing"/>
    <property type="evidence" value="ECO:0000250"/>
    <property type="project" value="UniProtKB"/>
</dbReference>
<dbReference type="FunFam" id="3.40.50.12760:FF:000005">
    <property type="entry name" value="Methyltransferase, putative"/>
    <property type="match status" value="1"/>
</dbReference>
<dbReference type="Gene3D" id="3.40.50.12760">
    <property type="match status" value="1"/>
</dbReference>
<dbReference type="InterPro" id="IPR050851">
    <property type="entry name" value="mRNA_Cap_2O-Ribose_MeTrfase"/>
</dbReference>
<dbReference type="InterPro" id="IPR002877">
    <property type="entry name" value="RNA_MeTrfase_FtsJ_dom"/>
</dbReference>
<dbReference type="InterPro" id="IPR025816">
    <property type="entry name" value="RrmJ-type_MeTrfase"/>
</dbReference>
<dbReference type="InterPro" id="IPR029063">
    <property type="entry name" value="SAM-dependent_MTases_sf"/>
</dbReference>
<dbReference type="PANTHER" id="PTHR16121:SF0">
    <property type="entry name" value="CAP-SPECIFIC MRNA (NUCLEOSIDE-2'-O-)-METHYLTRANSFERASE 1"/>
    <property type="match status" value="1"/>
</dbReference>
<dbReference type="PANTHER" id="PTHR16121">
    <property type="entry name" value="CAP-SPECIFIC MRNA (NUCLEOSIDE-2'-O-)-METHYLTRANSFERASE 1-RELATED"/>
    <property type="match status" value="1"/>
</dbReference>
<dbReference type="Pfam" id="PF01728">
    <property type="entry name" value="FtsJ"/>
    <property type="match status" value="1"/>
</dbReference>
<dbReference type="SUPFAM" id="SSF53335">
    <property type="entry name" value="S-adenosyl-L-methionine-dependent methyltransferases"/>
    <property type="match status" value="1"/>
</dbReference>
<dbReference type="PROSITE" id="PS51613">
    <property type="entry name" value="SAM_MT_RRMJ"/>
    <property type="match status" value="1"/>
</dbReference>
<feature type="chain" id="PRO_0000399803" description="Cap-specific mRNA (nucleoside-2'-O-)-methyltransferase 1">
    <location>
        <begin position="1"/>
        <end position="362"/>
    </location>
</feature>
<feature type="domain" description="RrmJ-type SAM-dependent 2'-O-MTase" evidence="2">
    <location>
        <begin position="87"/>
        <end position="294"/>
    </location>
</feature>
<feature type="active site" description="Proton acceptor" evidence="2">
    <location>
        <position position="248"/>
    </location>
</feature>
<feature type="binding site" evidence="2">
    <location>
        <position position="130"/>
    </location>
    <ligand>
        <name>S-adenosyl-L-methionine</name>
        <dbReference type="ChEBI" id="CHEBI:59789"/>
    </ligand>
</feature>
<feature type="binding site" evidence="2">
    <location>
        <position position="207"/>
    </location>
    <ligand>
        <name>S-adenosyl-L-methionine</name>
        <dbReference type="ChEBI" id="CHEBI:59789"/>
    </ligand>
</feature>
<name>MTR1_TRYCC</name>
<organism>
    <name type="scientific">Trypanosoma cruzi (strain CL Brener)</name>
    <dbReference type="NCBI Taxonomy" id="353153"/>
    <lineage>
        <taxon>Eukaryota</taxon>
        <taxon>Discoba</taxon>
        <taxon>Euglenozoa</taxon>
        <taxon>Kinetoplastea</taxon>
        <taxon>Metakinetoplastina</taxon>
        <taxon>Trypanosomatida</taxon>
        <taxon>Trypanosomatidae</taxon>
        <taxon>Trypanosoma</taxon>
        <taxon>Schizotrypanum</taxon>
    </lineage>
</organism>
<sequence length="362" mass="40886">MSEVTDKTVEFLLRHSASRRPPDIGSLKEKAFERVNWRDAFDRFQETERLTLWETKSELDGVDEGAYRVARDALFPFAVSGSQGAVSFGNRAGHKLREVMEATGVWEHLQRETSGQKGAVVFADVCGGPGAFSQALFEMSRQYKLRMRGFGMTLRNVRGLDWYSSLPLGKFLPTYGIDGTGDIFNLANIEALLSLTIRERLKLVVADGGFNVPFNIANYQETLSGRILFGQWLAALKLLRPGGCFILKLFDTFSPLSRALLYLSTYLYDRVHVVKPRHSRVVNSERYLVCLGFLGTPGPWMEYFEHCYQVGFSDNDSIPKIMPTSWVMEDKTFMKDLKQMNSTIASNQTLALKMVLAKLQPS</sequence>
<protein>
    <recommendedName>
        <fullName>Cap-specific mRNA (nucleoside-2'-O-)-methyltransferase 1</fullName>
        <ecNumber>2.1.1.57</ecNumber>
    </recommendedName>
    <alternativeName>
        <fullName>Cap1 2'O-ribose methyltransferase 1</fullName>
        <shortName>MTr1</shortName>
    </alternativeName>
</protein>
<proteinExistence type="inferred from homology"/>
<keyword id="KW-0489">Methyltransferase</keyword>
<keyword id="KW-0506">mRNA capping</keyword>
<keyword id="KW-0507">mRNA processing</keyword>
<keyword id="KW-0539">Nucleus</keyword>
<keyword id="KW-1185">Reference proteome</keyword>
<keyword id="KW-0949">S-adenosyl-L-methionine</keyword>
<keyword id="KW-0808">Transferase</keyword>